<evidence type="ECO:0000255" key="1">
    <source>
        <dbReference type="HAMAP-Rule" id="MF_00056"/>
    </source>
</evidence>
<proteinExistence type="inferred from homology"/>
<gene>
    <name evidence="1" type="primary">kdsA</name>
    <name type="ordered locus">Bxeno_A2845</name>
    <name type="ORF">Bxe_A1572</name>
</gene>
<feature type="chain" id="PRO_0000304440" description="2-dehydro-3-deoxyphosphooctonate aldolase">
    <location>
        <begin position="1"/>
        <end position="284"/>
    </location>
</feature>
<accession>Q13X06</accession>
<organism>
    <name type="scientific">Paraburkholderia xenovorans (strain LB400)</name>
    <dbReference type="NCBI Taxonomy" id="266265"/>
    <lineage>
        <taxon>Bacteria</taxon>
        <taxon>Pseudomonadati</taxon>
        <taxon>Pseudomonadota</taxon>
        <taxon>Betaproteobacteria</taxon>
        <taxon>Burkholderiales</taxon>
        <taxon>Burkholderiaceae</taxon>
        <taxon>Paraburkholderia</taxon>
    </lineage>
</organism>
<protein>
    <recommendedName>
        <fullName evidence="1">2-dehydro-3-deoxyphosphooctonate aldolase</fullName>
        <ecNumber evidence="1">2.5.1.55</ecNumber>
    </recommendedName>
    <alternativeName>
        <fullName evidence="1">3-deoxy-D-manno-octulosonic acid 8-phosphate synthase</fullName>
    </alternativeName>
    <alternativeName>
        <fullName evidence="1">KDO-8-phosphate synthase</fullName>
        <shortName evidence="1">KDO 8-P synthase</shortName>
        <shortName evidence="1">KDOPS</shortName>
    </alternativeName>
    <alternativeName>
        <fullName evidence="1">Phospho-2-dehydro-3-deoxyoctonate aldolase</fullName>
    </alternativeName>
</protein>
<name>KDSA_PARXL</name>
<comment type="catalytic activity">
    <reaction evidence="1">
        <text>D-arabinose 5-phosphate + phosphoenolpyruvate + H2O = 3-deoxy-alpha-D-manno-2-octulosonate-8-phosphate + phosphate</text>
        <dbReference type="Rhea" id="RHEA:14053"/>
        <dbReference type="ChEBI" id="CHEBI:15377"/>
        <dbReference type="ChEBI" id="CHEBI:43474"/>
        <dbReference type="ChEBI" id="CHEBI:57693"/>
        <dbReference type="ChEBI" id="CHEBI:58702"/>
        <dbReference type="ChEBI" id="CHEBI:85985"/>
        <dbReference type="EC" id="2.5.1.55"/>
    </reaction>
</comment>
<comment type="pathway">
    <text evidence="1">Carbohydrate biosynthesis; 3-deoxy-D-manno-octulosonate biosynthesis; 3-deoxy-D-manno-octulosonate from D-ribulose 5-phosphate: step 2/3.</text>
</comment>
<comment type="pathway">
    <text evidence="1">Bacterial outer membrane biogenesis; lipopolysaccharide biosynthesis.</text>
</comment>
<comment type="subcellular location">
    <subcellularLocation>
        <location evidence="1">Cytoplasm</location>
    </subcellularLocation>
</comment>
<comment type="similarity">
    <text evidence="1">Belongs to the KdsA family.</text>
</comment>
<reference key="1">
    <citation type="journal article" date="2006" name="Proc. Natl. Acad. Sci. U.S.A.">
        <title>Burkholderia xenovorans LB400 harbors a multi-replicon, 9.73-Mbp genome shaped for versatility.</title>
        <authorList>
            <person name="Chain P.S.G."/>
            <person name="Denef V.J."/>
            <person name="Konstantinidis K.T."/>
            <person name="Vergez L.M."/>
            <person name="Agullo L."/>
            <person name="Reyes V.L."/>
            <person name="Hauser L."/>
            <person name="Cordova M."/>
            <person name="Gomez L."/>
            <person name="Gonzalez M."/>
            <person name="Land M."/>
            <person name="Lao V."/>
            <person name="Larimer F."/>
            <person name="LiPuma J.J."/>
            <person name="Mahenthiralingam E."/>
            <person name="Malfatti S.A."/>
            <person name="Marx C.J."/>
            <person name="Parnell J.J."/>
            <person name="Ramette A."/>
            <person name="Richardson P."/>
            <person name="Seeger M."/>
            <person name="Smith D."/>
            <person name="Spilker T."/>
            <person name="Sul W.J."/>
            <person name="Tsoi T.V."/>
            <person name="Ulrich L.E."/>
            <person name="Zhulin I.B."/>
            <person name="Tiedje J.M."/>
        </authorList>
    </citation>
    <scope>NUCLEOTIDE SEQUENCE [LARGE SCALE GENOMIC DNA]</scope>
    <source>
        <strain>LB400</strain>
    </source>
</reference>
<sequence>MKLGDFEIGLDRPFFLIAGTCVVESEQMTIDTAGRLKEICAKLNIPFIYKSSYDKANRSSGKSFRGLGMDEGLRILSEVKRQLGLPVLTDVHAEHEIEQVASVVDVLQTPAFLCRQTDFIHACARSGKPVNIKKGQFLAPHDMKNVIDKARDAAREAGLSEDRFMACERGVSFGYNNLVSDMRSLAIMRETNAPVVFDATHSVQLPGGQGTSSGGQREFVPVLARAAVAVGVAGLFMETHPNPAQAKSDGPNAVPLHRMADLLETLVTLDRAVKRAPFLESDFN</sequence>
<dbReference type="EC" id="2.5.1.55" evidence="1"/>
<dbReference type="EMBL" id="CP000270">
    <property type="protein sequence ID" value="ABE31383.1"/>
    <property type="molecule type" value="Genomic_DNA"/>
</dbReference>
<dbReference type="RefSeq" id="WP_011488962.1">
    <property type="nucleotide sequence ID" value="NC_007951.1"/>
</dbReference>
<dbReference type="SMR" id="Q13X06"/>
<dbReference type="STRING" id="266265.Bxe_A1572"/>
<dbReference type="KEGG" id="bxb:DR64_3733"/>
<dbReference type="KEGG" id="bxe:Bxe_A1572"/>
<dbReference type="PATRIC" id="fig|266265.5.peg.2985"/>
<dbReference type="eggNOG" id="COG2877">
    <property type="taxonomic scope" value="Bacteria"/>
</dbReference>
<dbReference type="OrthoDB" id="9776934at2"/>
<dbReference type="UniPathway" id="UPA00030"/>
<dbReference type="UniPathway" id="UPA00357">
    <property type="reaction ID" value="UER00474"/>
</dbReference>
<dbReference type="Proteomes" id="UP000001817">
    <property type="component" value="Chromosome 1"/>
</dbReference>
<dbReference type="GO" id="GO:0005737">
    <property type="term" value="C:cytoplasm"/>
    <property type="evidence" value="ECO:0007669"/>
    <property type="project" value="UniProtKB-SubCell"/>
</dbReference>
<dbReference type="GO" id="GO:0008676">
    <property type="term" value="F:3-deoxy-8-phosphooctulonate synthase activity"/>
    <property type="evidence" value="ECO:0007669"/>
    <property type="project" value="UniProtKB-UniRule"/>
</dbReference>
<dbReference type="GO" id="GO:0019294">
    <property type="term" value="P:keto-3-deoxy-D-manno-octulosonic acid biosynthetic process"/>
    <property type="evidence" value="ECO:0007669"/>
    <property type="project" value="UniProtKB-UniRule"/>
</dbReference>
<dbReference type="Gene3D" id="3.20.20.70">
    <property type="entry name" value="Aldolase class I"/>
    <property type="match status" value="1"/>
</dbReference>
<dbReference type="HAMAP" id="MF_00056">
    <property type="entry name" value="KDO8P_synth"/>
    <property type="match status" value="1"/>
</dbReference>
<dbReference type="InterPro" id="IPR013785">
    <property type="entry name" value="Aldolase_TIM"/>
</dbReference>
<dbReference type="InterPro" id="IPR006218">
    <property type="entry name" value="DAHP1/KDSA"/>
</dbReference>
<dbReference type="InterPro" id="IPR006269">
    <property type="entry name" value="KDO8P_synthase"/>
</dbReference>
<dbReference type="NCBIfam" id="TIGR01362">
    <property type="entry name" value="KDO8P_synth"/>
    <property type="match status" value="1"/>
</dbReference>
<dbReference type="NCBIfam" id="NF003543">
    <property type="entry name" value="PRK05198.1"/>
    <property type="match status" value="1"/>
</dbReference>
<dbReference type="PANTHER" id="PTHR21057">
    <property type="entry name" value="PHOSPHO-2-DEHYDRO-3-DEOXYHEPTONATE ALDOLASE"/>
    <property type="match status" value="1"/>
</dbReference>
<dbReference type="Pfam" id="PF00793">
    <property type="entry name" value="DAHP_synth_1"/>
    <property type="match status" value="1"/>
</dbReference>
<dbReference type="SUPFAM" id="SSF51569">
    <property type="entry name" value="Aldolase"/>
    <property type="match status" value="1"/>
</dbReference>
<keyword id="KW-0963">Cytoplasm</keyword>
<keyword id="KW-0448">Lipopolysaccharide biosynthesis</keyword>
<keyword id="KW-1185">Reference proteome</keyword>
<keyword id="KW-0808">Transferase</keyword>